<protein>
    <recommendedName>
        <fullName evidence="1">Catalase-peroxidase</fullName>
        <shortName evidence="1">CP</shortName>
        <ecNumber evidence="1">1.11.1.21</ecNumber>
    </recommendedName>
    <alternativeName>
        <fullName evidence="1">Peroxidase/catalase</fullName>
    </alternativeName>
</protein>
<accession>A4TQ37</accession>
<evidence type="ECO:0000255" key="1">
    <source>
        <dbReference type="HAMAP-Rule" id="MF_01961"/>
    </source>
</evidence>
<reference key="1">
    <citation type="submission" date="2007-02" db="EMBL/GenBank/DDBJ databases">
        <title>Complete sequence of chromosome of Yersinia pestis Pestoides F.</title>
        <authorList>
            <consortium name="US DOE Joint Genome Institute"/>
            <person name="Copeland A."/>
            <person name="Lucas S."/>
            <person name="Lapidus A."/>
            <person name="Barry K."/>
            <person name="Detter J.C."/>
            <person name="Glavina del Rio T."/>
            <person name="Hammon N."/>
            <person name="Israni S."/>
            <person name="Dalin E."/>
            <person name="Tice H."/>
            <person name="Pitluck S."/>
            <person name="Di Bartolo G."/>
            <person name="Chain P."/>
            <person name="Malfatti S."/>
            <person name="Shin M."/>
            <person name="Vergez L."/>
            <person name="Schmutz J."/>
            <person name="Larimer F."/>
            <person name="Land M."/>
            <person name="Hauser L."/>
            <person name="Worsham P."/>
            <person name="Chu M."/>
            <person name="Bearden S."/>
            <person name="Garcia E."/>
            <person name="Richardson P."/>
        </authorList>
    </citation>
    <scope>NUCLEOTIDE SEQUENCE [LARGE SCALE GENOMIC DNA]</scope>
    <source>
        <strain>Pestoides F</strain>
    </source>
</reference>
<keyword id="KW-0349">Heme</keyword>
<keyword id="KW-0376">Hydrogen peroxide</keyword>
<keyword id="KW-0408">Iron</keyword>
<keyword id="KW-0479">Metal-binding</keyword>
<keyword id="KW-0560">Oxidoreductase</keyword>
<keyword id="KW-0575">Peroxidase</keyword>
<keyword id="KW-0732">Signal</keyword>
<gene>
    <name evidence="1" type="primary">katG</name>
    <name type="ordered locus">YPDSF_3041</name>
</gene>
<sequence length="737" mass="81365">MLKKILPVLITLAIVHNTPTAWAAEAPKTDSFYLPKSLDLSPLRLHNIESNPYGKDFNYAQQFKTLDLEAVKKDIKTVLTTSQDWWPADYGNYGPFFIRMAWHGAGTYRIYDGRGGADGGQQRFEPLNSWPDNANLDKARRLLWPIKKKYGAKISWGDLMVLTGNVALESMGFKTLGFAGGREDDWQSDLVYWGAGNKMLSDNRDKNGKLPKPLAATQMGLIYVNPEGPNGKPDPVAAAKDIREAFARMAMNDEETVALIAGGHTFGKAHGAASPEKCLGAAPGEAGLEQQGLGWANKCGSGNGKDTITSGLEGAWTTDPTHFTMQYLSNLYKHEWVLTKSPAGAWQWKPKNAANVVPDATDPTKFHPLMMFTTDIALKVDPEYKKITTRFLENPEEFKMAFARAWFKLTHRDMGPAARYLGDEVPKETFIWQDPLPAANYKMIDSADISELKDKILKTGLSDTKLIKTAWASASTFRGTDFRGGDNGARIRLAPQKDWPVNDPAELHSVLAALMEVQNNFNKDRSDGKKVSLSDLIVLGGNAAIEDAAKKAGYSISIPFTPGRTDASQEETDVSSFAVLEPTADGFRNYYDAKRNTLSPIASLIDRANKLELTVPEMTVLIGGLRVLDVNSGGSKAGVLTNTPGQLNNNFFVNLLDMSTKWTKSPKAEGYFDGYDRKTGKLKWTASSVDLVFGSNPELRAVAEVYASDDAKEKFVHDFTKVWEKVMNLDRFDIKNN</sequence>
<proteinExistence type="inferred from homology"/>
<comment type="function">
    <text evidence="1">Bifunctional enzyme with both catalase and broad-spectrum peroxidase activity.</text>
</comment>
<comment type="catalytic activity">
    <reaction evidence="1">
        <text>H2O2 + AH2 = A + 2 H2O</text>
        <dbReference type="Rhea" id="RHEA:30275"/>
        <dbReference type="ChEBI" id="CHEBI:13193"/>
        <dbReference type="ChEBI" id="CHEBI:15377"/>
        <dbReference type="ChEBI" id="CHEBI:16240"/>
        <dbReference type="ChEBI" id="CHEBI:17499"/>
        <dbReference type="EC" id="1.11.1.21"/>
    </reaction>
</comment>
<comment type="catalytic activity">
    <reaction evidence="1">
        <text>2 H2O2 = O2 + 2 H2O</text>
        <dbReference type="Rhea" id="RHEA:20309"/>
        <dbReference type="ChEBI" id="CHEBI:15377"/>
        <dbReference type="ChEBI" id="CHEBI:15379"/>
        <dbReference type="ChEBI" id="CHEBI:16240"/>
        <dbReference type="EC" id="1.11.1.21"/>
    </reaction>
</comment>
<comment type="cofactor">
    <cofactor evidence="1">
        <name>heme b</name>
        <dbReference type="ChEBI" id="CHEBI:60344"/>
    </cofactor>
    <text evidence="1">Binds 1 heme b (iron(II)-protoporphyrin IX) group per dimer.</text>
</comment>
<comment type="subunit">
    <text evidence="1">Homodimer or homotetramer.</text>
</comment>
<comment type="PTM">
    <text evidence="1">Formation of the three residue Trp-Tyr-Met cross-link is important for the catalase, but not the peroxidase activity of the enzyme.</text>
</comment>
<comment type="similarity">
    <text evidence="1">Belongs to the peroxidase family. Peroxidase/catalase subfamily.</text>
</comment>
<name>KATG_YERPP</name>
<organism>
    <name type="scientific">Yersinia pestis (strain Pestoides F)</name>
    <dbReference type="NCBI Taxonomy" id="386656"/>
    <lineage>
        <taxon>Bacteria</taxon>
        <taxon>Pseudomonadati</taxon>
        <taxon>Pseudomonadota</taxon>
        <taxon>Gammaproteobacteria</taxon>
        <taxon>Enterobacterales</taxon>
        <taxon>Yersiniaceae</taxon>
        <taxon>Yersinia</taxon>
    </lineage>
</organism>
<feature type="signal peptide" evidence="1">
    <location>
        <begin position="1"/>
        <end position="23"/>
    </location>
</feature>
<feature type="chain" id="PRO_5000236999" description="Catalase-peroxidase">
    <location>
        <begin position="24"/>
        <end position="737"/>
    </location>
</feature>
<feature type="active site" description="Proton acceptor" evidence="1">
    <location>
        <position position="103"/>
    </location>
</feature>
<feature type="binding site" description="axial binding residue" evidence="1">
    <location>
        <position position="264"/>
    </location>
    <ligand>
        <name>heme b</name>
        <dbReference type="ChEBI" id="CHEBI:60344"/>
    </ligand>
    <ligandPart>
        <name>Fe</name>
        <dbReference type="ChEBI" id="CHEBI:18248"/>
    </ligandPart>
</feature>
<feature type="site" description="Transition state stabilizer" evidence="1">
    <location>
        <position position="99"/>
    </location>
</feature>
<feature type="cross-link" description="Tryptophyl-tyrosyl-methioninium (Trp-Tyr) (with M-249)" evidence="1">
    <location>
        <begin position="102"/>
        <end position="223"/>
    </location>
</feature>
<feature type="cross-link" description="Tryptophyl-tyrosyl-methioninium (Tyr-Met) (with W-102)" evidence="1">
    <location>
        <begin position="223"/>
        <end position="249"/>
    </location>
</feature>
<dbReference type="EC" id="1.11.1.21" evidence="1"/>
<dbReference type="EMBL" id="CP000668">
    <property type="protein sequence ID" value="ABP41399.1"/>
    <property type="molecule type" value="Genomic_DNA"/>
</dbReference>
<dbReference type="RefSeq" id="WP_002209433.1">
    <property type="nucleotide sequence ID" value="NZ_CP009715.1"/>
</dbReference>
<dbReference type="SMR" id="A4TQ37"/>
<dbReference type="GeneID" id="57975390"/>
<dbReference type="KEGG" id="ypp:YPDSF_3041"/>
<dbReference type="PATRIC" id="fig|386656.14.peg.1318"/>
<dbReference type="GO" id="GO:0005829">
    <property type="term" value="C:cytosol"/>
    <property type="evidence" value="ECO:0007669"/>
    <property type="project" value="TreeGrafter"/>
</dbReference>
<dbReference type="GO" id="GO:0004096">
    <property type="term" value="F:catalase activity"/>
    <property type="evidence" value="ECO:0007669"/>
    <property type="project" value="UniProtKB-UniRule"/>
</dbReference>
<dbReference type="GO" id="GO:0020037">
    <property type="term" value="F:heme binding"/>
    <property type="evidence" value="ECO:0007669"/>
    <property type="project" value="InterPro"/>
</dbReference>
<dbReference type="GO" id="GO:0046872">
    <property type="term" value="F:metal ion binding"/>
    <property type="evidence" value="ECO:0007669"/>
    <property type="project" value="UniProtKB-KW"/>
</dbReference>
<dbReference type="GO" id="GO:0070301">
    <property type="term" value="P:cellular response to hydrogen peroxide"/>
    <property type="evidence" value="ECO:0007669"/>
    <property type="project" value="TreeGrafter"/>
</dbReference>
<dbReference type="GO" id="GO:0042744">
    <property type="term" value="P:hydrogen peroxide catabolic process"/>
    <property type="evidence" value="ECO:0007669"/>
    <property type="project" value="UniProtKB-KW"/>
</dbReference>
<dbReference type="CDD" id="cd00649">
    <property type="entry name" value="catalase_peroxidase_1"/>
    <property type="match status" value="1"/>
</dbReference>
<dbReference type="CDD" id="cd08200">
    <property type="entry name" value="catalase_peroxidase_2"/>
    <property type="match status" value="1"/>
</dbReference>
<dbReference type="FunFam" id="1.10.420.10:FF:000002">
    <property type="entry name" value="Catalase-peroxidase"/>
    <property type="match status" value="1"/>
</dbReference>
<dbReference type="FunFam" id="1.10.420.10:FF:000004">
    <property type="entry name" value="Catalase-peroxidase"/>
    <property type="match status" value="1"/>
</dbReference>
<dbReference type="FunFam" id="1.10.520.10:FF:000002">
    <property type="entry name" value="Catalase-peroxidase"/>
    <property type="match status" value="1"/>
</dbReference>
<dbReference type="Gene3D" id="1.10.520.10">
    <property type="match status" value="2"/>
</dbReference>
<dbReference type="Gene3D" id="1.10.420.10">
    <property type="entry name" value="Peroxidase, domain 2"/>
    <property type="match status" value="2"/>
</dbReference>
<dbReference type="HAMAP" id="MF_01961">
    <property type="entry name" value="Catal_peroxid"/>
    <property type="match status" value="1"/>
</dbReference>
<dbReference type="InterPro" id="IPR000763">
    <property type="entry name" value="Catalase_peroxidase"/>
</dbReference>
<dbReference type="InterPro" id="IPR002016">
    <property type="entry name" value="Haem_peroxidase"/>
</dbReference>
<dbReference type="InterPro" id="IPR010255">
    <property type="entry name" value="Haem_peroxidase_sf"/>
</dbReference>
<dbReference type="InterPro" id="IPR019794">
    <property type="entry name" value="Peroxidases_AS"/>
</dbReference>
<dbReference type="InterPro" id="IPR019793">
    <property type="entry name" value="Peroxidases_heam-ligand_BS"/>
</dbReference>
<dbReference type="NCBIfam" id="TIGR00198">
    <property type="entry name" value="cat_per_HPI"/>
    <property type="match status" value="1"/>
</dbReference>
<dbReference type="NCBIfam" id="NF011635">
    <property type="entry name" value="PRK15061.1"/>
    <property type="match status" value="1"/>
</dbReference>
<dbReference type="PANTHER" id="PTHR30555:SF0">
    <property type="entry name" value="CATALASE-PEROXIDASE"/>
    <property type="match status" value="1"/>
</dbReference>
<dbReference type="PANTHER" id="PTHR30555">
    <property type="entry name" value="HYDROPEROXIDASE I, BIFUNCTIONAL CATALASE-PEROXIDASE"/>
    <property type="match status" value="1"/>
</dbReference>
<dbReference type="Pfam" id="PF00141">
    <property type="entry name" value="peroxidase"/>
    <property type="match status" value="2"/>
</dbReference>
<dbReference type="PRINTS" id="PR00460">
    <property type="entry name" value="BPEROXIDASE"/>
</dbReference>
<dbReference type="PRINTS" id="PR00458">
    <property type="entry name" value="PEROXIDASE"/>
</dbReference>
<dbReference type="SUPFAM" id="SSF48113">
    <property type="entry name" value="Heme-dependent peroxidases"/>
    <property type="match status" value="2"/>
</dbReference>
<dbReference type="PROSITE" id="PS00435">
    <property type="entry name" value="PEROXIDASE_1"/>
    <property type="match status" value="1"/>
</dbReference>
<dbReference type="PROSITE" id="PS00436">
    <property type="entry name" value="PEROXIDASE_2"/>
    <property type="match status" value="1"/>
</dbReference>
<dbReference type="PROSITE" id="PS50873">
    <property type="entry name" value="PEROXIDASE_4"/>
    <property type="match status" value="1"/>
</dbReference>